<feature type="chain" id="PRO_0000394006" description="Enolase-phosphatase E1">
    <location>
        <begin position="1"/>
        <end position="233"/>
    </location>
</feature>
<feature type="binding site" evidence="1">
    <location>
        <position position="16"/>
    </location>
    <ligand>
        <name>Mg(2+)</name>
        <dbReference type="ChEBI" id="CHEBI:18420"/>
    </ligand>
</feature>
<feature type="binding site" evidence="1">
    <location>
        <position position="18"/>
    </location>
    <ligand>
        <name>Mg(2+)</name>
        <dbReference type="ChEBI" id="CHEBI:18420"/>
    </ligand>
</feature>
<feature type="binding site" evidence="1">
    <location>
        <begin position="131"/>
        <end position="132"/>
    </location>
    <ligand>
        <name>substrate</name>
    </ligand>
</feature>
<feature type="binding site" evidence="1">
    <location>
        <position position="167"/>
    </location>
    <ligand>
        <name>substrate</name>
    </ligand>
</feature>
<feature type="binding site" evidence="1">
    <location>
        <position position="193"/>
    </location>
    <ligand>
        <name>Mg(2+)</name>
        <dbReference type="ChEBI" id="CHEBI:18420"/>
    </ligand>
</feature>
<name>ENOPH_PICGU</name>
<comment type="function">
    <text evidence="1">Bifunctional enzyme that catalyzes the enolization of 2,3-diketo-5-methylthiopentyl-1-phosphate (DK-MTP-1-P) into the intermediate 2-hydroxy-3-keto-5-methylthiopentenyl-1-phosphate (HK-MTPenyl-1-P), which is then dephosphorylated to form the acireductone 1,2-dihydroxy-3-keto-5-methylthiopentene (DHK-MTPene).</text>
</comment>
<comment type="catalytic activity">
    <reaction evidence="1">
        <text>5-methylsulfanyl-2,3-dioxopentyl phosphate + H2O = 1,2-dihydroxy-5-(methylsulfanyl)pent-1-en-3-one + phosphate</text>
        <dbReference type="Rhea" id="RHEA:21700"/>
        <dbReference type="ChEBI" id="CHEBI:15377"/>
        <dbReference type="ChEBI" id="CHEBI:43474"/>
        <dbReference type="ChEBI" id="CHEBI:49252"/>
        <dbReference type="ChEBI" id="CHEBI:58828"/>
        <dbReference type="EC" id="3.1.3.77"/>
    </reaction>
</comment>
<comment type="cofactor">
    <cofactor evidence="1">
        <name>Mg(2+)</name>
        <dbReference type="ChEBI" id="CHEBI:18420"/>
    </cofactor>
    <text evidence="1">Binds 1 Mg(2+) ion per subunit.</text>
</comment>
<comment type="pathway">
    <text evidence="1">Amino-acid biosynthesis; L-methionine biosynthesis via salvage pathway; L-methionine from S-methyl-5-thio-alpha-D-ribose 1-phosphate: step 3/6.</text>
</comment>
<comment type="pathway">
    <text evidence="1">Amino-acid biosynthesis; L-methionine biosynthesis via salvage pathway; L-methionine from S-methyl-5-thio-alpha-D-ribose 1-phosphate: step 4/6.</text>
</comment>
<comment type="subunit">
    <text evidence="1">Monomer.</text>
</comment>
<comment type="subcellular location">
    <subcellularLocation>
        <location evidence="1">Cytoplasm</location>
    </subcellularLocation>
    <subcellularLocation>
        <location evidence="1">Nucleus</location>
    </subcellularLocation>
</comment>
<comment type="similarity">
    <text evidence="1">Belongs to the HAD-like hydrolase superfamily. MasA/MtnC family.</text>
</comment>
<gene>
    <name evidence="1" type="primary">UTR4</name>
    <name type="ORF">PGUG_03163</name>
</gene>
<accession>A5DIR2</accession>
<reference key="1">
    <citation type="journal article" date="2009" name="Nature">
        <title>Evolution of pathogenicity and sexual reproduction in eight Candida genomes.</title>
        <authorList>
            <person name="Butler G."/>
            <person name="Rasmussen M.D."/>
            <person name="Lin M.F."/>
            <person name="Santos M.A.S."/>
            <person name="Sakthikumar S."/>
            <person name="Munro C.A."/>
            <person name="Rheinbay E."/>
            <person name="Grabherr M."/>
            <person name="Forche A."/>
            <person name="Reedy J.L."/>
            <person name="Agrafioti I."/>
            <person name="Arnaud M.B."/>
            <person name="Bates S."/>
            <person name="Brown A.J.P."/>
            <person name="Brunke S."/>
            <person name="Costanzo M.C."/>
            <person name="Fitzpatrick D.A."/>
            <person name="de Groot P.W.J."/>
            <person name="Harris D."/>
            <person name="Hoyer L.L."/>
            <person name="Hube B."/>
            <person name="Klis F.M."/>
            <person name="Kodira C."/>
            <person name="Lennard N."/>
            <person name="Logue M.E."/>
            <person name="Martin R."/>
            <person name="Neiman A.M."/>
            <person name="Nikolaou E."/>
            <person name="Quail M.A."/>
            <person name="Quinn J."/>
            <person name="Santos M.C."/>
            <person name="Schmitzberger F.F."/>
            <person name="Sherlock G."/>
            <person name="Shah P."/>
            <person name="Silverstein K.A.T."/>
            <person name="Skrzypek M.S."/>
            <person name="Soll D."/>
            <person name="Staggs R."/>
            <person name="Stansfield I."/>
            <person name="Stumpf M.P.H."/>
            <person name="Sudbery P.E."/>
            <person name="Srikantha T."/>
            <person name="Zeng Q."/>
            <person name="Berman J."/>
            <person name="Berriman M."/>
            <person name="Heitman J."/>
            <person name="Gow N.A.R."/>
            <person name="Lorenz M.C."/>
            <person name="Birren B.W."/>
            <person name="Kellis M."/>
            <person name="Cuomo C.A."/>
        </authorList>
    </citation>
    <scope>NUCLEOTIDE SEQUENCE [LARGE SCALE GENOMIC DNA]</scope>
    <source>
        <strain>ATCC 6260 / CBS 566 / DSM 6381 / JCM 1539 / NBRC 10279 / NRRL Y-324</strain>
    </source>
</reference>
<proteinExistence type="inferred from homology"/>
<evidence type="ECO:0000255" key="1">
    <source>
        <dbReference type="HAMAP-Rule" id="MF_03117"/>
    </source>
</evidence>
<dbReference type="EC" id="3.1.3.77" evidence="1"/>
<dbReference type="EMBL" id="CH408157">
    <property type="protein sequence ID" value="EDK39065.2"/>
    <property type="molecule type" value="Genomic_DNA"/>
</dbReference>
<dbReference type="RefSeq" id="XP_001485434.1">
    <property type="nucleotide sequence ID" value="XM_001485384.1"/>
</dbReference>
<dbReference type="SMR" id="A5DIR2"/>
<dbReference type="FunCoup" id="A5DIR2">
    <property type="interactions" value="654"/>
</dbReference>
<dbReference type="STRING" id="294746.A5DIR2"/>
<dbReference type="GeneID" id="5127253"/>
<dbReference type="KEGG" id="pgu:PGUG_03163"/>
<dbReference type="VEuPathDB" id="FungiDB:PGUG_03163"/>
<dbReference type="eggNOG" id="KOG2630">
    <property type="taxonomic scope" value="Eukaryota"/>
</dbReference>
<dbReference type="HOGENOM" id="CLU_023273_1_1_1"/>
<dbReference type="InParanoid" id="A5DIR2"/>
<dbReference type="OMA" id="LQGMVWE"/>
<dbReference type="OrthoDB" id="272500at2759"/>
<dbReference type="UniPathway" id="UPA00904">
    <property type="reaction ID" value="UER00876"/>
</dbReference>
<dbReference type="UniPathway" id="UPA00904">
    <property type="reaction ID" value="UER00877"/>
</dbReference>
<dbReference type="Proteomes" id="UP000001997">
    <property type="component" value="Unassembled WGS sequence"/>
</dbReference>
<dbReference type="GO" id="GO:0005737">
    <property type="term" value="C:cytoplasm"/>
    <property type="evidence" value="ECO:0007669"/>
    <property type="project" value="UniProtKB-SubCell"/>
</dbReference>
<dbReference type="GO" id="GO:0005634">
    <property type="term" value="C:nucleus"/>
    <property type="evidence" value="ECO:0007669"/>
    <property type="project" value="UniProtKB-SubCell"/>
</dbReference>
<dbReference type="GO" id="GO:0043874">
    <property type="term" value="F:acireductone synthase activity"/>
    <property type="evidence" value="ECO:0007669"/>
    <property type="project" value="UniProtKB-EC"/>
</dbReference>
<dbReference type="GO" id="GO:0000287">
    <property type="term" value="F:magnesium ion binding"/>
    <property type="evidence" value="ECO:0007669"/>
    <property type="project" value="UniProtKB-UniRule"/>
</dbReference>
<dbReference type="GO" id="GO:0019509">
    <property type="term" value="P:L-methionine salvage from methylthioadenosine"/>
    <property type="evidence" value="ECO:0007669"/>
    <property type="project" value="UniProtKB-UniRule"/>
</dbReference>
<dbReference type="CDD" id="cd01629">
    <property type="entry name" value="HAD_EP"/>
    <property type="match status" value="1"/>
</dbReference>
<dbReference type="Gene3D" id="1.10.720.60">
    <property type="match status" value="1"/>
</dbReference>
<dbReference type="Gene3D" id="3.40.50.1000">
    <property type="entry name" value="HAD superfamily/HAD-like"/>
    <property type="match status" value="1"/>
</dbReference>
<dbReference type="HAMAP" id="MF_03117">
    <property type="entry name" value="Salvage_MtnC_euk"/>
    <property type="match status" value="1"/>
</dbReference>
<dbReference type="InterPro" id="IPR023943">
    <property type="entry name" value="Enolase-ppase_E1"/>
</dbReference>
<dbReference type="InterPro" id="IPR027511">
    <property type="entry name" value="ENOPH1_eukaryotes"/>
</dbReference>
<dbReference type="InterPro" id="IPR036412">
    <property type="entry name" value="HAD-like_sf"/>
</dbReference>
<dbReference type="InterPro" id="IPR023214">
    <property type="entry name" value="HAD_sf"/>
</dbReference>
<dbReference type="NCBIfam" id="TIGR01691">
    <property type="entry name" value="enolase-ppase"/>
    <property type="match status" value="1"/>
</dbReference>
<dbReference type="PANTHER" id="PTHR20371">
    <property type="entry name" value="ENOLASE-PHOSPHATASE E1"/>
    <property type="match status" value="1"/>
</dbReference>
<dbReference type="PANTHER" id="PTHR20371:SF1">
    <property type="entry name" value="ENOLASE-PHOSPHATASE E1"/>
    <property type="match status" value="1"/>
</dbReference>
<dbReference type="SFLD" id="SFLDG01133">
    <property type="entry name" value="C1.5.4:_Enolase-phosphatase_Li"/>
    <property type="match status" value="1"/>
</dbReference>
<dbReference type="SFLD" id="SFLDS00003">
    <property type="entry name" value="Haloacid_Dehalogenase"/>
    <property type="match status" value="1"/>
</dbReference>
<dbReference type="SUPFAM" id="SSF56784">
    <property type="entry name" value="HAD-like"/>
    <property type="match status" value="1"/>
</dbReference>
<protein>
    <recommendedName>
        <fullName evidence="1">Enolase-phosphatase E1</fullName>
        <ecNumber evidence="1">3.1.3.77</ecNumber>
    </recommendedName>
    <alternativeName>
        <fullName evidence="1">2,3-diketo-5-methylthio-1-phosphopentane phosphatase</fullName>
    </alternativeName>
</protein>
<organism>
    <name type="scientific">Meyerozyma guilliermondii (strain ATCC 6260 / CBS 566 / DSM 6381 / JCM 1539 / NBRC 10279 / NRRL Y-324)</name>
    <name type="common">Yeast</name>
    <name type="synonym">Candida guilliermondii</name>
    <dbReference type="NCBI Taxonomy" id="294746"/>
    <lineage>
        <taxon>Eukaryota</taxon>
        <taxon>Fungi</taxon>
        <taxon>Dikarya</taxon>
        <taxon>Ascomycota</taxon>
        <taxon>Saccharomycotina</taxon>
        <taxon>Pichiomycetes</taxon>
        <taxon>Debaryomycetaceae</taxon>
        <taxon>Meyerozyma</taxon>
    </lineage>
</organism>
<sequence length="233" mass="25482">MKTECRELFAMTVILDIEGTVCPITFVKDTLFPYFLEQLHPILSSLQFPLDKADPVANICSQFPSHVQQDETSLITYIRQLVASDTKDPVLKSLQGLVWKKGYDNGDLVAPIYDDAIALITTSSEPIYIYSSGSVAAQKLLFSHVKGNLDLTPHLAGYFDITTSGHKQDSTSYKSILHAIGNPEPATVTFYSDSPAEVRAAIEAGMKATIVVRPGNGPLTDQDRQLGTITSFP</sequence>
<keyword id="KW-0028">Amino-acid biosynthesis</keyword>
<keyword id="KW-0963">Cytoplasm</keyword>
<keyword id="KW-0378">Hydrolase</keyword>
<keyword id="KW-0460">Magnesium</keyword>
<keyword id="KW-0479">Metal-binding</keyword>
<keyword id="KW-0486">Methionine biosynthesis</keyword>
<keyword id="KW-0539">Nucleus</keyword>
<keyword id="KW-1185">Reference proteome</keyword>